<feature type="chain" id="PRO_1000206211" description="Nucleoside diphosphate kinase">
    <location>
        <begin position="1"/>
        <end position="139"/>
    </location>
</feature>
<feature type="active site" description="Pros-phosphohistidine intermediate" evidence="1">
    <location>
        <position position="115"/>
    </location>
</feature>
<feature type="binding site" evidence="1">
    <location>
        <position position="9"/>
    </location>
    <ligand>
        <name>ATP</name>
        <dbReference type="ChEBI" id="CHEBI:30616"/>
    </ligand>
</feature>
<feature type="binding site" evidence="1">
    <location>
        <position position="57"/>
    </location>
    <ligand>
        <name>ATP</name>
        <dbReference type="ChEBI" id="CHEBI:30616"/>
    </ligand>
</feature>
<feature type="binding site" evidence="1">
    <location>
        <position position="85"/>
    </location>
    <ligand>
        <name>ATP</name>
        <dbReference type="ChEBI" id="CHEBI:30616"/>
    </ligand>
</feature>
<feature type="binding site" evidence="1">
    <location>
        <position position="91"/>
    </location>
    <ligand>
        <name>ATP</name>
        <dbReference type="ChEBI" id="CHEBI:30616"/>
    </ligand>
</feature>
<feature type="binding site" evidence="1">
    <location>
        <position position="102"/>
    </location>
    <ligand>
        <name>ATP</name>
        <dbReference type="ChEBI" id="CHEBI:30616"/>
    </ligand>
</feature>
<feature type="binding site" evidence="1">
    <location>
        <position position="112"/>
    </location>
    <ligand>
        <name>ATP</name>
        <dbReference type="ChEBI" id="CHEBI:30616"/>
    </ligand>
</feature>
<sequence length="139" mass="15371">MEKTFLMVKPDGVKRGLIGEIISRFENKGYTLNRLEMVTPSVEVAEAHYAEHKEKPFFGELVEFLTSGPVVAMEWEGEDIVAVSRLMIGKTKPVDAQPGTIRGDFASTMSQNVIHGSDSVDSAERELSLWFAEVASHVS</sequence>
<organism>
    <name type="scientific">Exiguobacterium sp. (strain ATCC BAA-1283 / AT1b)</name>
    <dbReference type="NCBI Taxonomy" id="360911"/>
    <lineage>
        <taxon>Bacteria</taxon>
        <taxon>Bacillati</taxon>
        <taxon>Bacillota</taxon>
        <taxon>Bacilli</taxon>
        <taxon>Bacillales</taxon>
        <taxon>Bacillales Family XII. Incertae Sedis</taxon>
        <taxon>Exiguobacterium</taxon>
    </lineage>
</organism>
<proteinExistence type="inferred from homology"/>
<evidence type="ECO:0000255" key="1">
    <source>
        <dbReference type="HAMAP-Rule" id="MF_00451"/>
    </source>
</evidence>
<dbReference type="EC" id="2.7.4.6" evidence="1"/>
<dbReference type="EMBL" id="CP001615">
    <property type="protein sequence ID" value="ACQ71910.1"/>
    <property type="molecule type" value="Genomic_DNA"/>
</dbReference>
<dbReference type="RefSeq" id="WP_015881469.1">
    <property type="nucleotide sequence ID" value="NC_012673.1"/>
</dbReference>
<dbReference type="SMR" id="C4L6N1"/>
<dbReference type="STRING" id="360911.EAT1b_2996"/>
<dbReference type="GeneID" id="94372340"/>
<dbReference type="KEGG" id="eat:EAT1b_2996"/>
<dbReference type="eggNOG" id="COG0105">
    <property type="taxonomic scope" value="Bacteria"/>
</dbReference>
<dbReference type="HOGENOM" id="CLU_060216_6_3_9"/>
<dbReference type="OrthoDB" id="9801161at2"/>
<dbReference type="Proteomes" id="UP000000716">
    <property type="component" value="Chromosome"/>
</dbReference>
<dbReference type="GO" id="GO:0005737">
    <property type="term" value="C:cytoplasm"/>
    <property type="evidence" value="ECO:0007669"/>
    <property type="project" value="UniProtKB-SubCell"/>
</dbReference>
<dbReference type="GO" id="GO:0005524">
    <property type="term" value="F:ATP binding"/>
    <property type="evidence" value="ECO:0007669"/>
    <property type="project" value="UniProtKB-UniRule"/>
</dbReference>
<dbReference type="GO" id="GO:0046872">
    <property type="term" value="F:metal ion binding"/>
    <property type="evidence" value="ECO:0007669"/>
    <property type="project" value="UniProtKB-KW"/>
</dbReference>
<dbReference type="GO" id="GO:0004550">
    <property type="term" value="F:nucleoside diphosphate kinase activity"/>
    <property type="evidence" value="ECO:0007669"/>
    <property type="project" value="UniProtKB-UniRule"/>
</dbReference>
<dbReference type="GO" id="GO:0006241">
    <property type="term" value="P:CTP biosynthetic process"/>
    <property type="evidence" value="ECO:0007669"/>
    <property type="project" value="UniProtKB-UniRule"/>
</dbReference>
<dbReference type="GO" id="GO:0006183">
    <property type="term" value="P:GTP biosynthetic process"/>
    <property type="evidence" value="ECO:0007669"/>
    <property type="project" value="UniProtKB-UniRule"/>
</dbReference>
<dbReference type="GO" id="GO:0006228">
    <property type="term" value="P:UTP biosynthetic process"/>
    <property type="evidence" value="ECO:0007669"/>
    <property type="project" value="UniProtKB-UniRule"/>
</dbReference>
<dbReference type="CDD" id="cd04413">
    <property type="entry name" value="NDPk_I"/>
    <property type="match status" value="1"/>
</dbReference>
<dbReference type="FunFam" id="3.30.70.141:FF:000002">
    <property type="entry name" value="Nucleoside diphosphate kinase"/>
    <property type="match status" value="1"/>
</dbReference>
<dbReference type="Gene3D" id="3.30.70.141">
    <property type="entry name" value="Nucleoside diphosphate kinase-like domain"/>
    <property type="match status" value="1"/>
</dbReference>
<dbReference type="HAMAP" id="MF_00451">
    <property type="entry name" value="NDP_kinase"/>
    <property type="match status" value="1"/>
</dbReference>
<dbReference type="InterPro" id="IPR034907">
    <property type="entry name" value="NDK-like_dom"/>
</dbReference>
<dbReference type="InterPro" id="IPR036850">
    <property type="entry name" value="NDK-like_dom_sf"/>
</dbReference>
<dbReference type="InterPro" id="IPR001564">
    <property type="entry name" value="Nucleoside_diP_kinase"/>
</dbReference>
<dbReference type="InterPro" id="IPR023005">
    <property type="entry name" value="Nucleoside_diP_kinase_AS"/>
</dbReference>
<dbReference type="NCBIfam" id="NF001908">
    <property type="entry name" value="PRK00668.1"/>
    <property type="match status" value="1"/>
</dbReference>
<dbReference type="PANTHER" id="PTHR11349">
    <property type="entry name" value="NUCLEOSIDE DIPHOSPHATE KINASE"/>
    <property type="match status" value="1"/>
</dbReference>
<dbReference type="Pfam" id="PF00334">
    <property type="entry name" value="NDK"/>
    <property type="match status" value="1"/>
</dbReference>
<dbReference type="PRINTS" id="PR01243">
    <property type="entry name" value="NUCDPKINASE"/>
</dbReference>
<dbReference type="SMART" id="SM00562">
    <property type="entry name" value="NDK"/>
    <property type="match status" value="1"/>
</dbReference>
<dbReference type="SUPFAM" id="SSF54919">
    <property type="entry name" value="Nucleoside diphosphate kinase, NDK"/>
    <property type="match status" value="1"/>
</dbReference>
<dbReference type="PROSITE" id="PS00469">
    <property type="entry name" value="NDPK"/>
    <property type="match status" value="1"/>
</dbReference>
<dbReference type="PROSITE" id="PS51374">
    <property type="entry name" value="NDPK_LIKE"/>
    <property type="match status" value="1"/>
</dbReference>
<gene>
    <name evidence="1" type="primary">ndk</name>
    <name type="ordered locus">EAT1b_2996</name>
</gene>
<reference key="1">
    <citation type="journal article" date="2011" name="J. Bacteriol.">
        <title>Complete genome sequence of the Thermophilic Bacterium Exiguobacterium sp. AT1b.</title>
        <authorList>
            <person name="Vishnivetskaya T.A."/>
            <person name="Lucas S."/>
            <person name="Copeland A."/>
            <person name="Lapidus A."/>
            <person name="Glavina del Rio T."/>
            <person name="Dalin E."/>
            <person name="Tice H."/>
            <person name="Bruce D.C."/>
            <person name="Goodwin L.A."/>
            <person name="Pitluck S."/>
            <person name="Saunders E."/>
            <person name="Brettin T."/>
            <person name="Detter C."/>
            <person name="Han C."/>
            <person name="Larimer F."/>
            <person name="Land M.L."/>
            <person name="Hauser L.J."/>
            <person name="Kyrpides N.C."/>
            <person name="Ovchinnikova G."/>
            <person name="Kathariou S."/>
            <person name="Ramaley R.F."/>
            <person name="Rodrigues D.F."/>
            <person name="Hendrix C."/>
            <person name="Richardson P."/>
            <person name="Tiedje J.M."/>
        </authorList>
    </citation>
    <scope>NUCLEOTIDE SEQUENCE [LARGE SCALE GENOMIC DNA]</scope>
    <source>
        <strain>ATCC BAA-1283 / AT1b</strain>
    </source>
</reference>
<name>NDK_EXISA</name>
<protein>
    <recommendedName>
        <fullName evidence="1">Nucleoside diphosphate kinase</fullName>
        <shortName evidence="1">NDK</shortName>
        <shortName evidence="1">NDP kinase</shortName>
        <ecNumber evidence="1">2.7.4.6</ecNumber>
    </recommendedName>
    <alternativeName>
        <fullName evidence="1">Nucleoside-2-P kinase</fullName>
    </alternativeName>
</protein>
<comment type="function">
    <text evidence="1">Major role in the synthesis of nucleoside triphosphates other than ATP. The ATP gamma phosphate is transferred to the NDP beta phosphate via a ping-pong mechanism, using a phosphorylated active-site intermediate.</text>
</comment>
<comment type="catalytic activity">
    <reaction evidence="1">
        <text>a 2'-deoxyribonucleoside 5'-diphosphate + ATP = a 2'-deoxyribonucleoside 5'-triphosphate + ADP</text>
        <dbReference type="Rhea" id="RHEA:44640"/>
        <dbReference type="ChEBI" id="CHEBI:30616"/>
        <dbReference type="ChEBI" id="CHEBI:61560"/>
        <dbReference type="ChEBI" id="CHEBI:73316"/>
        <dbReference type="ChEBI" id="CHEBI:456216"/>
        <dbReference type="EC" id="2.7.4.6"/>
    </reaction>
</comment>
<comment type="catalytic activity">
    <reaction evidence="1">
        <text>a ribonucleoside 5'-diphosphate + ATP = a ribonucleoside 5'-triphosphate + ADP</text>
        <dbReference type="Rhea" id="RHEA:18113"/>
        <dbReference type="ChEBI" id="CHEBI:30616"/>
        <dbReference type="ChEBI" id="CHEBI:57930"/>
        <dbReference type="ChEBI" id="CHEBI:61557"/>
        <dbReference type="ChEBI" id="CHEBI:456216"/>
        <dbReference type="EC" id="2.7.4.6"/>
    </reaction>
</comment>
<comment type="cofactor">
    <cofactor evidence="1">
        <name>Mg(2+)</name>
        <dbReference type="ChEBI" id="CHEBI:18420"/>
    </cofactor>
</comment>
<comment type="subunit">
    <text evidence="1">Homotetramer.</text>
</comment>
<comment type="subcellular location">
    <subcellularLocation>
        <location evidence="1">Cytoplasm</location>
    </subcellularLocation>
</comment>
<comment type="similarity">
    <text evidence="1">Belongs to the NDK family.</text>
</comment>
<accession>C4L6N1</accession>
<keyword id="KW-0067">ATP-binding</keyword>
<keyword id="KW-0963">Cytoplasm</keyword>
<keyword id="KW-0418">Kinase</keyword>
<keyword id="KW-0460">Magnesium</keyword>
<keyword id="KW-0479">Metal-binding</keyword>
<keyword id="KW-0546">Nucleotide metabolism</keyword>
<keyword id="KW-0547">Nucleotide-binding</keyword>
<keyword id="KW-0597">Phosphoprotein</keyword>
<keyword id="KW-0808">Transferase</keyword>